<organism>
    <name type="scientific">Mus musculus</name>
    <name type="common">Mouse</name>
    <dbReference type="NCBI Taxonomy" id="10090"/>
    <lineage>
        <taxon>Eukaryota</taxon>
        <taxon>Metazoa</taxon>
        <taxon>Chordata</taxon>
        <taxon>Craniata</taxon>
        <taxon>Vertebrata</taxon>
        <taxon>Euteleostomi</taxon>
        <taxon>Mammalia</taxon>
        <taxon>Eutheria</taxon>
        <taxon>Euarchontoglires</taxon>
        <taxon>Glires</taxon>
        <taxon>Rodentia</taxon>
        <taxon>Myomorpha</taxon>
        <taxon>Muroidea</taxon>
        <taxon>Muridae</taxon>
        <taxon>Murinae</taxon>
        <taxon>Mus</taxon>
        <taxon>Mus</taxon>
    </lineage>
</organism>
<proteinExistence type="evidence at protein level"/>
<dbReference type="EMBL" id="D49546">
    <property type="protein sequence ID" value="BAE92567.1"/>
    <property type="molecule type" value="mRNA"/>
</dbReference>
<dbReference type="EMBL" id="AF013118">
    <property type="protein sequence ID" value="AAC39967.2"/>
    <property type="molecule type" value="mRNA"/>
</dbReference>
<dbReference type="EMBL" id="BC004069">
    <property type="protein sequence ID" value="AAH04069.1"/>
    <property type="molecule type" value="mRNA"/>
</dbReference>
<dbReference type="EMBL" id="BC016118">
    <property type="protein sequence ID" value="AAH16118.1"/>
    <property type="molecule type" value="mRNA"/>
</dbReference>
<dbReference type="EMBL" id="BC023374">
    <property type="protein sequence ID" value="AAH23374.1"/>
    <property type="molecule type" value="mRNA"/>
</dbReference>
<dbReference type="EMBL" id="BC070429">
    <property type="protein sequence ID" value="AAH70429.1"/>
    <property type="status" value="ALT_INIT"/>
    <property type="molecule type" value="mRNA"/>
</dbReference>
<dbReference type="EMBL" id="AK132895">
    <property type="protein sequence ID" value="BAE21409.1"/>
    <property type="status" value="ALT_INIT"/>
    <property type="molecule type" value="mRNA"/>
</dbReference>
<dbReference type="EMBL" id="AK135926">
    <property type="protein sequence ID" value="BAE22727.1"/>
    <property type="molecule type" value="mRNA"/>
</dbReference>
<dbReference type="EMBL" id="AB001457">
    <property type="protein sequence ID" value="BAA22399.1"/>
    <property type="molecule type" value="mRNA"/>
</dbReference>
<dbReference type="CCDS" id="CCDS52640.1">
    <molecule id="O35231-1"/>
</dbReference>
<dbReference type="RefSeq" id="NP_001139303.1">
    <property type="nucleotide sequence ID" value="NM_001145831.1"/>
</dbReference>
<dbReference type="RefSeq" id="NP_001139304.1">
    <property type="nucleotide sequence ID" value="NM_001145832.1"/>
</dbReference>
<dbReference type="RefSeq" id="NP_034761.3">
    <molecule id="O35231-1"/>
    <property type="nucleotide sequence ID" value="NM_010631.3"/>
</dbReference>
<dbReference type="SMR" id="O35231"/>
<dbReference type="BioGRID" id="200954">
    <property type="interactions" value="5"/>
</dbReference>
<dbReference type="FunCoup" id="O35231">
    <property type="interactions" value="107"/>
</dbReference>
<dbReference type="IntAct" id="O35231">
    <property type="interactions" value="4"/>
</dbReference>
<dbReference type="MINT" id="O35231"/>
<dbReference type="STRING" id="10090.ENSMUSP00000034240"/>
<dbReference type="GlyGen" id="O35231">
    <property type="glycosylation" value="1 site"/>
</dbReference>
<dbReference type="iPTMnet" id="O35231"/>
<dbReference type="PhosphoSitePlus" id="O35231"/>
<dbReference type="PaxDb" id="10090-ENSMUSP00000034240"/>
<dbReference type="ProteomicsDB" id="263607">
    <molecule id="O35231-1"/>
</dbReference>
<dbReference type="ProteomicsDB" id="263608">
    <molecule id="O35231-2"/>
</dbReference>
<dbReference type="Antibodypedia" id="15192">
    <property type="antibodies" value="94 antibodies from 25 providers"/>
</dbReference>
<dbReference type="DNASU" id="16582"/>
<dbReference type="Ensembl" id="ENSMUST00000034240.15">
    <molecule id="O35231-1"/>
    <property type="protein sequence ID" value="ENSMUSP00000034240.8"/>
    <property type="gene ID" value="ENSMUSG00000031788.15"/>
</dbReference>
<dbReference type="Ensembl" id="ENSMUST00000169353.3">
    <molecule id="O35231-2"/>
    <property type="protein sequence ID" value="ENSMUSP00000127427.3"/>
    <property type="gene ID" value="ENSMUSG00000031788.15"/>
</dbReference>
<dbReference type="GeneID" id="16582"/>
<dbReference type="KEGG" id="mmu:16582"/>
<dbReference type="UCSC" id="uc009mxu.1">
    <molecule id="O35231-2"/>
    <property type="organism name" value="mouse"/>
</dbReference>
<dbReference type="UCSC" id="uc009mxv.1">
    <molecule id="O35231-1"/>
    <property type="organism name" value="mouse"/>
</dbReference>
<dbReference type="AGR" id="MGI:109202"/>
<dbReference type="CTD" id="3801"/>
<dbReference type="MGI" id="MGI:109202">
    <property type="gene designation" value="Kifc3"/>
</dbReference>
<dbReference type="VEuPathDB" id="HostDB:ENSMUSG00000031788"/>
<dbReference type="eggNOG" id="KOG0239">
    <property type="taxonomic scope" value="Eukaryota"/>
</dbReference>
<dbReference type="GeneTree" id="ENSGT00940000154022"/>
<dbReference type="InParanoid" id="O35231"/>
<dbReference type="OMA" id="RHDMQKC"/>
<dbReference type="OrthoDB" id="3176171at2759"/>
<dbReference type="PhylomeDB" id="O35231"/>
<dbReference type="TreeFam" id="TF105238"/>
<dbReference type="BioGRID-ORCS" id="16582">
    <property type="hits" value="2 hits in 77 CRISPR screens"/>
</dbReference>
<dbReference type="ChiTaRS" id="Kifc3">
    <property type="organism name" value="mouse"/>
</dbReference>
<dbReference type="PRO" id="PR:O35231"/>
<dbReference type="Proteomes" id="UP000000589">
    <property type="component" value="Chromosome 8"/>
</dbReference>
<dbReference type="RNAct" id="O35231">
    <property type="molecule type" value="protein"/>
</dbReference>
<dbReference type="Bgee" id="ENSMUSG00000031788">
    <property type="expression patterns" value="Expressed in right kidney and 232 other cell types or tissues"/>
</dbReference>
<dbReference type="ExpressionAtlas" id="O35231">
    <property type="expression patterns" value="baseline and differential"/>
</dbReference>
<dbReference type="GO" id="GO:0005813">
    <property type="term" value="C:centrosome"/>
    <property type="evidence" value="ECO:0000250"/>
    <property type="project" value="UniProtKB"/>
</dbReference>
<dbReference type="GO" id="GO:0030659">
    <property type="term" value="C:cytoplasmic vesicle membrane"/>
    <property type="evidence" value="ECO:0007669"/>
    <property type="project" value="UniProtKB-SubCell"/>
</dbReference>
<dbReference type="GO" id="GO:0005794">
    <property type="term" value="C:Golgi apparatus"/>
    <property type="evidence" value="ECO:0000314"/>
    <property type="project" value="MGI"/>
</dbReference>
<dbReference type="GO" id="GO:0005871">
    <property type="term" value="C:kinesin complex"/>
    <property type="evidence" value="ECO:0000314"/>
    <property type="project" value="MGI"/>
</dbReference>
<dbReference type="GO" id="GO:0005874">
    <property type="term" value="C:microtubule"/>
    <property type="evidence" value="ECO:0007669"/>
    <property type="project" value="UniProtKB-KW"/>
</dbReference>
<dbReference type="GO" id="GO:0005915">
    <property type="term" value="C:zonula adherens"/>
    <property type="evidence" value="ECO:0000250"/>
    <property type="project" value="UniProtKB"/>
</dbReference>
<dbReference type="GO" id="GO:0005524">
    <property type="term" value="F:ATP binding"/>
    <property type="evidence" value="ECO:0007669"/>
    <property type="project" value="UniProtKB-KW"/>
</dbReference>
<dbReference type="GO" id="GO:0008017">
    <property type="term" value="F:microtubule binding"/>
    <property type="evidence" value="ECO:0007669"/>
    <property type="project" value="InterPro"/>
</dbReference>
<dbReference type="GO" id="GO:0008569">
    <property type="term" value="F:minus-end-directed microtubule motor activity"/>
    <property type="evidence" value="ECO:0000304"/>
    <property type="project" value="MGI"/>
</dbReference>
<dbReference type="GO" id="GO:0090136">
    <property type="term" value="P:epithelial cell-cell adhesion"/>
    <property type="evidence" value="ECO:0000250"/>
    <property type="project" value="UniProtKB"/>
</dbReference>
<dbReference type="GO" id="GO:0007030">
    <property type="term" value="P:Golgi organization"/>
    <property type="evidence" value="ECO:0000315"/>
    <property type="project" value="MGI"/>
</dbReference>
<dbReference type="GO" id="GO:0007018">
    <property type="term" value="P:microtubule-based movement"/>
    <property type="evidence" value="ECO:0007669"/>
    <property type="project" value="InterPro"/>
</dbReference>
<dbReference type="GO" id="GO:0007017">
    <property type="term" value="P:microtubule-based process"/>
    <property type="evidence" value="ECO:0000314"/>
    <property type="project" value="MGI"/>
</dbReference>
<dbReference type="GO" id="GO:0045218">
    <property type="term" value="P:zonula adherens maintenance"/>
    <property type="evidence" value="ECO:0000250"/>
    <property type="project" value="UniProtKB"/>
</dbReference>
<dbReference type="CDD" id="cd01366">
    <property type="entry name" value="KISc_C_terminal"/>
    <property type="match status" value="1"/>
</dbReference>
<dbReference type="FunFam" id="3.40.850.10:FF:000022">
    <property type="entry name" value="Kinesin-like protein"/>
    <property type="match status" value="1"/>
</dbReference>
<dbReference type="Gene3D" id="3.40.850.10">
    <property type="entry name" value="Kinesin motor domain"/>
    <property type="match status" value="1"/>
</dbReference>
<dbReference type="InterPro" id="IPR027640">
    <property type="entry name" value="Kinesin-like_fam"/>
</dbReference>
<dbReference type="InterPro" id="IPR019821">
    <property type="entry name" value="Kinesin_motor_CS"/>
</dbReference>
<dbReference type="InterPro" id="IPR001752">
    <property type="entry name" value="Kinesin_motor_dom"/>
</dbReference>
<dbReference type="InterPro" id="IPR036961">
    <property type="entry name" value="Kinesin_motor_dom_sf"/>
</dbReference>
<dbReference type="InterPro" id="IPR027417">
    <property type="entry name" value="P-loop_NTPase"/>
</dbReference>
<dbReference type="PANTHER" id="PTHR47972:SF5">
    <property type="entry name" value="KINESIN-LIKE PROTEIN KIFC3"/>
    <property type="match status" value="1"/>
</dbReference>
<dbReference type="PANTHER" id="PTHR47972">
    <property type="entry name" value="KINESIN-LIKE PROTEIN KLP-3"/>
    <property type="match status" value="1"/>
</dbReference>
<dbReference type="Pfam" id="PF00225">
    <property type="entry name" value="Kinesin"/>
    <property type="match status" value="1"/>
</dbReference>
<dbReference type="PRINTS" id="PR00380">
    <property type="entry name" value="KINESINHEAVY"/>
</dbReference>
<dbReference type="SMART" id="SM00129">
    <property type="entry name" value="KISc"/>
    <property type="match status" value="1"/>
</dbReference>
<dbReference type="SUPFAM" id="SSF52540">
    <property type="entry name" value="P-loop containing nucleoside triphosphate hydrolases"/>
    <property type="match status" value="1"/>
</dbReference>
<dbReference type="PROSITE" id="PS00411">
    <property type="entry name" value="KINESIN_MOTOR_1"/>
    <property type="match status" value="1"/>
</dbReference>
<dbReference type="PROSITE" id="PS50067">
    <property type="entry name" value="KINESIN_MOTOR_2"/>
    <property type="match status" value="1"/>
</dbReference>
<protein>
    <recommendedName>
        <fullName>Kinesin-like protein KIFC3</fullName>
    </recommendedName>
</protein>
<accession>O35231</accession>
<accession>O35072</accession>
<accession>Q1WNZ8</accession>
<accession>Q3UX36</accession>
<accession>Q3V0U4</accession>
<accession>Q6NS71</accession>
<accession>Q8R3Y4</accession>
<accession>Q91YQ2</accession>
<accession>Q99KP7</accession>
<sequence length="824" mass="92556">MVPSRRTWNLGATPSLRGLWRVGRVQEPKPGMARPAPASPAARPFPHTGQGRLRTGRGKDILPSGEEDSTSRTAARPSLAQCRALSVDWPGPRSPHRLYLTVQVENLKEKLISQAQEVSRLRSELGGTDAEKHRDRLMVENEQLRQELRRCEVELQELRAQPVVPCEGCEHSQESSQLRDKLSQLQLEVAENKGMLSELNLEVQQKTDRLAEVELRLKDCLAEKAQEEERLSRRLRDSHETIASLRAQSPPVKYVIKTVEVESSKTKQALSESQTRNQHLQEQVAMQRQVLKEMEQQLQNSHQLTVQLRAQIAMYEAELERAHGQMLEEMQSLEEDKNRAIEEAFARAQVEMKAVHENLAGVRTNLLTLQPALRTLTNDYNGLKRQVRGFPLLLQEALRSVKAEIGQAIEEVNSNNQELLRKYRRELQLRKKCHNELVRLKGNIRVIARVRPVTKEDGEGPEATNAVTFDPDDDSIIHLLHKGKPVSFELDKVFSPWASQQDVFQEVQALITSCIDGFNVCIFAYGQTGAGKTYTMEGTPENPGINQRALQLLFSEVQEKASDWQYNITVSAAEIYNEVLRDLLGKEPQEKLEIRLCPDGSGQLYVPGLTEFQVQSVDDINKVFEFGYNNRTTEFTNLNEHSSRSHALLIVTVRGVDCSTGLRTTGKLNLVDLAGSERVGKSGAEGNRLREAQHINRSLSALGDVIAALRSRQGHVPFRNSKLTYLLQDSLSGDSKTLMVVQVSPVEKNTSETLYSLRFAERVRSVELGPGSRRTELGSWSSQEHLEWEPACQTPQPTARAHSAPGSGTSSRPGSIRRKLQPSA</sequence>
<keyword id="KW-0025">Alternative splicing</keyword>
<keyword id="KW-0067">ATP-binding</keyword>
<keyword id="KW-0965">Cell junction</keyword>
<keyword id="KW-0175">Coiled coil</keyword>
<keyword id="KW-0963">Cytoplasm</keyword>
<keyword id="KW-0968">Cytoplasmic vesicle</keyword>
<keyword id="KW-0206">Cytoskeleton</keyword>
<keyword id="KW-0472">Membrane</keyword>
<keyword id="KW-0493">Microtubule</keyword>
<keyword id="KW-0505">Motor protein</keyword>
<keyword id="KW-0547">Nucleotide-binding</keyword>
<keyword id="KW-0597">Phosphoprotein</keyword>
<keyword id="KW-1185">Reference proteome</keyword>
<name>KIFC3_MOUSE</name>
<reference key="1">
    <citation type="journal article" date="2001" name="J. Cell Biol.">
        <title>KIFC3, a microtubule minus end-directed motor for the apical transport of annexin XIIIb-associated Triton-insoluble membranes.</title>
        <authorList>
            <person name="Noda Y."/>
            <person name="Okada Y."/>
            <person name="Saito N."/>
            <person name="Setou M."/>
            <person name="Xu Y."/>
            <person name="Zhang Z."/>
            <person name="Hirokawa N."/>
        </authorList>
    </citation>
    <scope>NUCLEOTIDE SEQUENCE [MRNA] (ISOFORM 1)</scope>
    <scope>FUNCTION</scope>
    <scope>SUBCELLULAR LOCATION</scope>
    <scope>TISSUE SPECIFICITY</scope>
    <scope>INTERACTION WITH ANNEXIN XIIIB</scope>
    <source>
        <strain>ICR</strain>
        <tissue>Brain</tissue>
    </source>
</reference>
<reference key="2">
    <citation type="journal article" date="2001" name="Mol. Cell. Biol.">
        <title>Molecular cloning and functional analysis of mouse C-terminal kinesin motor KifC3.</title>
        <authorList>
            <person name="Yang Z."/>
            <person name="Xia C.H."/>
            <person name="Roberts E.A."/>
            <person name="Bush K."/>
            <person name="Nigam S.K."/>
            <person name="Goldstein L.S."/>
        </authorList>
    </citation>
    <scope>NUCLEOTIDE SEQUENCE [MRNA] (ISOFORM 2)</scope>
    <source>
        <tissue>Brain</tissue>
    </source>
</reference>
<reference key="3">
    <citation type="journal article" date="2004" name="Genome Res.">
        <title>The status, quality, and expansion of the NIH full-length cDNA project: the Mammalian Gene Collection (MGC).</title>
        <authorList>
            <consortium name="The MGC Project Team"/>
        </authorList>
    </citation>
    <scope>NUCLEOTIDE SEQUENCE [LARGE SCALE MRNA] (ISOFORM 1)</scope>
    <source>
        <strain>C57BL/6J</strain>
        <strain>Czech II</strain>
        <strain>FVB/N</strain>
        <tissue>Brain</tissue>
        <tissue>Mammary tumor</tissue>
    </source>
</reference>
<reference key="4">
    <citation type="journal article" date="2005" name="Science">
        <title>The transcriptional landscape of the mammalian genome.</title>
        <authorList>
            <person name="Carninci P."/>
            <person name="Kasukawa T."/>
            <person name="Katayama S."/>
            <person name="Gough J."/>
            <person name="Frith M.C."/>
            <person name="Maeda N."/>
            <person name="Oyama R."/>
            <person name="Ravasi T."/>
            <person name="Lenhard B."/>
            <person name="Wells C."/>
            <person name="Kodzius R."/>
            <person name="Shimokawa K."/>
            <person name="Bajic V.B."/>
            <person name="Brenner S.E."/>
            <person name="Batalov S."/>
            <person name="Forrest A.R."/>
            <person name="Zavolan M."/>
            <person name="Davis M.J."/>
            <person name="Wilming L.G."/>
            <person name="Aidinis V."/>
            <person name="Allen J.E."/>
            <person name="Ambesi-Impiombato A."/>
            <person name="Apweiler R."/>
            <person name="Aturaliya R.N."/>
            <person name="Bailey T.L."/>
            <person name="Bansal M."/>
            <person name="Baxter L."/>
            <person name="Beisel K.W."/>
            <person name="Bersano T."/>
            <person name="Bono H."/>
            <person name="Chalk A.M."/>
            <person name="Chiu K.P."/>
            <person name="Choudhary V."/>
            <person name="Christoffels A."/>
            <person name="Clutterbuck D.R."/>
            <person name="Crowe M.L."/>
            <person name="Dalla E."/>
            <person name="Dalrymple B.P."/>
            <person name="de Bono B."/>
            <person name="Della Gatta G."/>
            <person name="di Bernardo D."/>
            <person name="Down T."/>
            <person name="Engstrom P."/>
            <person name="Fagiolini M."/>
            <person name="Faulkner G."/>
            <person name="Fletcher C.F."/>
            <person name="Fukushima T."/>
            <person name="Furuno M."/>
            <person name="Futaki S."/>
            <person name="Gariboldi M."/>
            <person name="Georgii-Hemming P."/>
            <person name="Gingeras T.R."/>
            <person name="Gojobori T."/>
            <person name="Green R.E."/>
            <person name="Gustincich S."/>
            <person name="Harbers M."/>
            <person name="Hayashi Y."/>
            <person name="Hensch T.K."/>
            <person name="Hirokawa N."/>
            <person name="Hill D."/>
            <person name="Huminiecki L."/>
            <person name="Iacono M."/>
            <person name="Ikeo K."/>
            <person name="Iwama A."/>
            <person name="Ishikawa T."/>
            <person name="Jakt M."/>
            <person name="Kanapin A."/>
            <person name="Katoh M."/>
            <person name="Kawasawa Y."/>
            <person name="Kelso J."/>
            <person name="Kitamura H."/>
            <person name="Kitano H."/>
            <person name="Kollias G."/>
            <person name="Krishnan S.P."/>
            <person name="Kruger A."/>
            <person name="Kummerfeld S.K."/>
            <person name="Kurochkin I.V."/>
            <person name="Lareau L.F."/>
            <person name="Lazarevic D."/>
            <person name="Lipovich L."/>
            <person name="Liu J."/>
            <person name="Liuni S."/>
            <person name="McWilliam S."/>
            <person name="Madan Babu M."/>
            <person name="Madera M."/>
            <person name="Marchionni L."/>
            <person name="Matsuda H."/>
            <person name="Matsuzawa S."/>
            <person name="Miki H."/>
            <person name="Mignone F."/>
            <person name="Miyake S."/>
            <person name="Morris K."/>
            <person name="Mottagui-Tabar S."/>
            <person name="Mulder N."/>
            <person name="Nakano N."/>
            <person name="Nakauchi H."/>
            <person name="Ng P."/>
            <person name="Nilsson R."/>
            <person name="Nishiguchi S."/>
            <person name="Nishikawa S."/>
            <person name="Nori F."/>
            <person name="Ohara O."/>
            <person name="Okazaki Y."/>
            <person name="Orlando V."/>
            <person name="Pang K.C."/>
            <person name="Pavan W.J."/>
            <person name="Pavesi G."/>
            <person name="Pesole G."/>
            <person name="Petrovsky N."/>
            <person name="Piazza S."/>
            <person name="Reed J."/>
            <person name="Reid J.F."/>
            <person name="Ring B.Z."/>
            <person name="Ringwald M."/>
            <person name="Rost B."/>
            <person name="Ruan Y."/>
            <person name="Salzberg S.L."/>
            <person name="Sandelin A."/>
            <person name="Schneider C."/>
            <person name="Schoenbach C."/>
            <person name="Sekiguchi K."/>
            <person name="Semple C.A."/>
            <person name="Seno S."/>
            <person name="Sessa L."/>
            <person name="Sheng Y."/>
            <person name="Shibata Y."/>
            <person name="Shimada H."/>
            <person name="Shimada K."/>
            <person name="Silva D."/>
            <person name="Sinclair B."/>
            <person name="Sperling S."/>
            <person name="Stupka E."/>
            <person name="Sugiura K."/>
            <person name="Sultana R."/>
            <person name="Takenaka Y."/>
            <person name="Taki K."/>
            <person name="Tammoja K."/>
            <person name="Tan S.L."/>
            <person name="Tang S."/>
            <person name="Taylor M.S."/>
            <person name="Tegner J."/>
            <person name="Teichmann S.A."/>
            <person name="Ueda H.R."/>
            <person name="van Nimwegen E."/>
            <person name="Verardo R."/>
            <person name="Wei C.L."/>
            <person name="Yagi K."/>
            <person name="Yamanishi H."/>
            <person name="Zabarovsky E."/>
            <person name="Zhu S."/>
            <person name="Zimmer A."/>
            <person name="Hide W."/>
            <person name="Bult C."/>
            <person name="Grimmond S.M."/>
            <person name="Teasdale R.D."/>
            <person name="Liu E.T."/>
            <person name="Brusic V."/>
            <person name="Quackenbush J."/>
            <person name="Wahlestedt C."/>
            <person name="Mattick J.S."/>
            <person name="Hume D.A."/>
            <person name="Kai C."/>
            <person name="Sasaki D."/>
            <person name="Tomaru Y."/>
            <person name="Fukuda S."/>
            <person name="Kanamori-Katayama M."/>
            <person name="Suzuki M."/>
            <person name="Aoki J."/>
            <person name="Arakawa T."/>
            <person name="Iida J."/>
            <person name="Imamura K."/>
            <person name="Itoh M."/>
            <person name="Kato T."/>
            <person name="Kawaji H."/>
            <person name="Kawagashira N."/>
            <person name="Kawashima T."/>
            <person name="Kojima M."/>
            <person name="Kondo S."/>
            <person name="Konno H."/>
            <person name="Nakano K."/>
            <person name="Ninomiya N."/>
            <person name="Nishio T."/>
            <person name="Okada M."/>
            <person name="Plessy C."/>
            <person name="Shibata K."/>
            <person name="Shiraki T."/>
            <person name="Suzuki S."/>
            <person name="Tagami M."/>
            <person name="Waki K."/>
            <person name="Watahiki A."/>
            <person name="Okamura-Oho Y."/>
            <person name="Suzuki H."/>
            <person name="Kawai J."/>
            <person name="Hayashizaki Y."/>
        </authorList>
    </citation>
    <scope>NUCLEOTIDE SEQUENCE [LARGE SCALE MRNA] OF 66-824 (ISOFORM 1)</scope>
    <source>
        <strain>C57BL/6J</strain>
        <tissue>Testis</tissue>
    </source>
</reference>
<reference key="5">
    <citation type="journal article" date="1997" name="Proc. Natl. Acad. Sci. U.S.A.">
        <title>Identification and classification of 16 new kinesin superfamily (KIF) proteins in mouse genome.</title>
        <authorList>
            <person name="Nakagawa T."/>
            <person name="Tanaka Y."/>
            <person name="Matsuoka E."/>
            <person name="Kondo S."/>
            <person name="Okada Y."/>
            <person name="Noda Y."/>
            <person name="Kanai Y."/>
            <person name="Hirokawa N."/>
        </authorList>
    </citation>
    <scope>NUCLEOTIDE SEQUENCE [MRNA] OF 522-678</scope>
    <source>
        <strain>ICR</strain>
    </source>
</reference>
<comment type="function">
    <text evidence="6">Minus-end microtubule-dependent motor protein. Involved in apically targeted transport. Required for zonula adherens maintenance.</text>
</comment>
<comment type="subunit">
    <text evidence="6">Interacts with annexin XIIIB.</text>
</comment>
<comment type="interaction">
    <interactant intactId="EBI-11097964">
        <id>O35231</id>
    </interactant>
    <interactant intactId="EBI-4285225">
        <id>Q9WTX8</id>
        <label>Mad1l1</label>
    </interactant>
    <organismsDiffer>false</organismsDiffer>
    <experiments>3</experiments>
</comment>
<comment type="subcellular location">
    <subcellularLocation>
        <location evidence="6">Cytoplasm</location>
        <location evidence="6">Cytoskeleton</location>
    </subcellularLocation>
    <subcellularLocation>
        <location evidence="9">Cytoplasmic vesicle membrane</location>
        <topology evidence="9">Peripheral membrane protein</topology>
    </subcellularLocation>
    <subcellularLocation>
        <location evidence="1">Cell junction</location>
        <location evidence="1">Adherens junction</location>
    </subcellularLocation>
    <subcellularLocation>
        <location evidence="1">Cytoplasm</location>
        <location evidence="1">Cytoskeleton</location>
        <location evidence="1">Microtubule organizing center</location>
        <location evidence="1">Centrosome</location>
    </subcellularLocation>
    <text evidence="1">Localizes along zonula adherens only at mature cell-cell contacts (By similarity). Apical cell membrane. On membrane organelles immediately beneath the apical plasma membrane of renal tubular epithelial cells. Localized in the distal tubules and loops of Henle in the kidney, but not in the proximal tubules or the glomeruli, with stronger staining in the apical area of these epithelial cells.</text>
</comment>
<comment type="alternative products">
    <event type="alternative splicing"/>
    <isoform>
        <id>O35231-1</id>
        <name>1</name>
        <sequence type="displayed"/>
    </isoform>
    <isoform>
        <id>O35231-2</id>
        <name>2</name>
        <sequence type="described" ref="VSP_022363 VSP_022364"/>
    </isoform>
</comment>
<comment type="tissue specificity">
    <text evidence="6">Predominant expression in the kidney, testis and ovary. Also expressed in brain, heart, liver, lung and uterus.</text>
</comment>
<comment type="similarity">
    <text evidence="4">Belongs to the TRAFAC class myosin-kinesin ATPase superfamily. Kinesin family.</text>
</comment>
<comment type="sequence caution" evidence="8">
    <conflict type="erroneous initiation">
        <sequence resource="EMBL-CDS" id="AAH70429"/>
    </conflict>
</comment>
<comment type="sequence caution" evidence="8">
    <conflict type="erroneous initiation">
        <sequence resource="EMBL-CDS" id="BAE21409"/>
    </conflict>
</comment>
<evidence type="ECO:0000250" key="1"/>
<evidence type="ECO:0000250" key="2">
    <source>
        <dbReference type="UniProtKB" id="Q9BVG8"/>
    </source>
</evidence>
<evidence type="ECO:0000255" key="3"/>
<evidence type="ECO:0000255" key="4">
    <source>
        <dbReference type="PROSITE-ProRule" id="PRU00283"/>
    </source>
</evidence>
<evidence type="ECO:0000256" key="5">
    <source>
        <dbReference type="SAM" id="MobiDB-lite"/>
    </source>
</evidence>
<evidence type="ECO:0000269" key="6">
    <source>
    </source>
</evidence>
<evidence type="ECO:0000303" key="7">
    <source>
    </source>
</evidence>
<evidence type="ECO:0000305" key="8"/>
<evidence type="ECO:0000305" key="9">
    <source>
    </source>
</evidence>
<gene>
    <name type="primary">Kifc3</name>
</gene>
<feature type="chain" id="PRO_0000125432" description="Kinesin-like protein KIFC3">
    <location>
        <begin position="1"/>
        <end position="824"/>
    </location>
</feature>
<feature type="domain" description="Kinesin motor" evidence="4">
    <location>
        <begin position="443"/>
        <end position="766"/>
    </location>
</feature>
<feature type="region of interest" description="Disordered" evidence="5">
    <location>
        <begin position="27"/>
        <end position="79"/>
    </location>
</feature>
<feature type="region of interest" description="Disordered" evidence="5">
    <location>
        <begin position="771"/>
        <end position="824"/>
    </location>
</feature>
<feature type="coiled-coil region" evidence="3">
    <location>
        <begin position="100"/>
        <end position="360"/>
    </location>
</feature>
<feature type="coiled-coil region" evidence="3">
    <location>
        <begin position="393"/>
        <end position="430"/>
    </location>
</feature>
<feature type="compositionally biased region" description="Low complexity" evidence="5">
    <location>
        <begin position="33"/>
        <end position="46"/>
    </location>
</feature>
<feature type="compositionally biased region" description="Basic residues" evidence="5">
    <location>
        <begin position="815"/>
        <end position="824"/>
    </location>
</feature>
<feature type="binding site" evidence="4">
    <location>
        <begin position="526"/>
        <end position="533"/>
    </location>
    <ligand>
        <name>ATP</name>
        <dbReference type="ChEBI" id="CHEBI:30616"/>
    </ligand>
</feature>
<feature type="modified residue" description="Phosphoserine" evidence="2">
    <location>
        <position position="811"/>
    </location>
</feature>
<feature type="modified residue" description="Phosphoserine" evidence="2">
    <location>
        <position position="815"/>
    </location>
</feature>
<feature type="splice variant" id="VSP_022363" description="In isoform 2." evidence="7">
    <location>
        <begin position="1"/>
        <end position="115"/>
    </location>
</feature>
<feature type="splice variant" id="VSP_022364" description="In isoform 2." evidence="7">
    <original>QEVSRLRSEL</original>
    <variation>MPPLGPGSPQ</variation>
    <location>
        <begin position="116"/>
        <end position="125"/>
    </location>
</feature>
<feature type="sequence conflict" description="In Ref. 4; BAE21409." evidence="8" ref="4">
    <original>EDSTSRTA</original>
    <variation>HCQPTFPT</variation>
    <location>
        <begin position="67"/>
        <end position="74"/>
    </location>
</feature>
<feature type="sequence conflict" description="In Ref. 4; BAE21409." evidence="8" ref="4">
    <original>RPSLAQCR</original>
    <variation>GLRAQHQP</variation>
    <location>
        <begin position="76"/>
        <end position="83"/>
    </location>
</feature>
<feature type="sequence conflict" description="In Ref. 4; BAE21409." evidence="8" ref="4">
    <original>SVDWPGPRSPHRLYLTVQ</original>
    <variation>ETAKVRTSALGVVRRCGE</variation>
    <location>
        <begin position="86"/>
        <end position="103"/>
    </location>
</feature>
<feature type="sequence conflict" description="In Ref. 1; BAE92567." evidence="8" ref="1">
    <original>R</original>
    <variation>Q</variation>
    <location>
        <position position="122"/>
    </location>
</feature>
<feature type="sequence conflict" description="In Ref. 2; AAC39967." evidence="8" ref="2">
    <original>EL</original>
    <variation>DV</variation>
    <location>
        <begin position="214"/>
        <end position="215"/>
    </location>
</feature>
<feature type="sequence conflict" description="In Ref. 1; BAE92567." evidence="8" ref="1">
    <original>D</original>
    <variation>Y</variation>
    <location>
        <position position="237"/>
    </location>
</feature>
<feature type="sequence conflict" description="In Ref. 2; AAC39967." evidence="8" ref="2">
    <original>A</original>
    <variation>R</variation>
    <location>
        <position position="573"/>
    </location>
</feature>
<feature type="sequence conflict" description="In Ref. 2; AAC39967." evidence="8" ref="2">
    <original>S</original>
    <variation>R</variation>
    <location>
        <position position="659"/>
    </location>
</feature>
<feature type="sequence conflict" description="In Ref. 1; BAE92567." evidence="8" ref="1">
    <original>R</original>
    <variation>Q</variation>
    <location>
        <position position="690"/>
    </location>
</feature>